<accession>B9K8E3</accession>
<sequence>MGFQIAIDGPAASGKSTIAKLLAERLGFEHLNTGATYRAVAVYLKEKGLNPSSPREELEKALKDVKVDYRDGRVFINGKDYTEKIQSPEAGILASDFAKLDLVREHLVRIQREICDDKNIVVEGRDIGTVVLPDAQLKIFLTASLEARIERKLREYQKKGLNVSREEVERELISRDTQDSSRKIAPLKPAEDAVVIDTTSMSVNEVLQKILKLVEERMKA</sequence>
<comment type="catalytic activity">
    <reaction evidence="1">
        <text>CMP + ATP = CDP + ADP</text>
        <dbReference type="Rhea" id="RHEA:11600"/>
        <dbReference type="ChEBI" id="CHEBI:30616"/>
        <dbReference type="ChEBI" id="CHEBI:58069"/>
        <dbReference type="ChEBI" id="CHEBI:60377"/>
        <dbReference type="ChEBI" id="CHEBI:456216"/>
        <dbReference type="EC" id="2.7.4.25"/>
    </reaction>
</comment>
<comment type="catalytic activity">
    <reaction evidence="1">
        <text>dCMP + ATP = dCDP + ADP</text>
        <dbReference type="Rhea" id="RHEA:25094"/>
        <dbReference type="ChEBI" id="CHEBI:30616"/>
        <dbReference type="ChEBI" id="CHEBI:57566"/>
        <dbReference type="ChEBI" id="CHEBI:58593"/>
        <dbReference type="ChEBI" id="CHEBI:456216"/>
        <dbReference type="EC" id="2.7.4.25"/>
    </reaction>
</comment>
<comment type="subcellular location">
    <subcellularLocation>
        <location evidence="1">Cytoplasm</location>
    </subcellularLocation>
</comment>
<comment type="similarity">
    <text evidence="1">Belongs to the cytidylate kinase family. Type 1 subfamily.</text>
</comment>
<name>KCY_THENN</name>
<protein>
    <recommendedName>
        <fullName evidence="1">Cytidylate kinase</fullName>
        <shortName evidence="1">CK</shortName>
        <ecNumber evidence="1">2.7.4.25</ecNumber>
    </recommendedName>
    <alternativeName>
        <fullName evidence="1">Cytidine monophosphate kinase</fullName>
        <shortName evidence="1">CMP kinase</shortName>
    </alternativeName>
</protein>
<dbReference type="EC" id="2.7.4.25" evidence="1"/>
<dbReference type="EMBL" id="CP000916">
    <property type="protein sequence ID" value="ACM23226.1"/>
    <property type="molecule type" value="Genomic_DNA"/>
</dbReference>
<dbReference type="RefSeq" id="WP_015919542.1">
    <property type="nucleotide sequence ID" value="NC_011978.1"/>
</dbReference>
<dbReference type="SMR" id="B9K8E3"/>
<dbReference type="STRING" id="309803.CTN_1050"/>
<dbReference type="KEGG" id="tna:CTN_1050"/>
<dbReference type="eggNOG" id="COG0283">
    <property type="taxonomic scope" value="Bacteria"/>
</dbReference>
<dbReference type="HOGENOM" id="CLU_079959_0_2_0"/>
<dbReference type="Proteomes" id="UP000000445">
    <property type="component" value="Chromosome"/>
</dbReference>
<dbReference type="GO" id="GO:0005829">
    <property type="term" value="C:cytosol"/>
    <property type="evidence" value="ECO:0007669"/>
    <property type="project" value="TreeGrafter"/>
</dbReference>
<dbReference type="GO" id="GO:0005524">
    <property type="term" value="F:ATP binding"/>
    <property type="evidence" value="ECO:0007669"/>
    <property type="project" value="UniProtKB-UniRule"/>
</dbReference>
<dbReference type="GO" id="GO:0036430">
    <property type="term" value="F:CMP kinase activity"/>
    <property type="evidence" value="ECO:0007669"/>
    <property type="project" value="RHEA"/>
</dbReference>
<dbReference type="GO" id="GO:0036431">
    <property type="term" value="F:dCMP kinase activity"/>
    <property type="evidence" value="ECO:0007669"/>
    <property type="project" value="RHEA"/>
</dbReference>
<dbReference type="GO" id="GO:0015949">
    <property type="term" value="P:nucleobase-containing small molecule interconversion"/>
    <property type="evidence" value="ECO:0007669"/>
    <property type="project" value="TreeGrafter"/>
</dbReference>
<dbReference type="GO" id="GO:0006220">
    <property type="term" value="P:pyrimidine nucleotide metabolic process"/>
    <property type="evidence" value="ECO:0007669"/>
    <property type="project" value="UniProtKB-UniRule"/>
</dbReference>
<dbReference type="CDD" id="cd02020">
    <property type="entry name" value="CMPK"/>
    <property type="match status" value="1"/>
</dbReference>
<dbReference type="FunFam" id="3.40.50.300:FF:002458">
    <property type="entry name" value="Cytidylate kinase"/>
    <property type="match status" value="1"/>
</dbReference>
<dbReference type="Gene3D" id="3.40.50.300">
    <property type="entry name" value="P-loop containing nucleotide triphosphate hydrolases"/>
    <property type="match status" value="1"/>
</dbReference>
<dbReference type="HAMAP" id="MF_00238">
    <property type="entry name" value="Cytidyl_kinase_type1"/>
    <property type="match status" value="1"/>
</dbReference>
<dbReference type="InterPro" id="IPR003136">
    <property type="entry name" value="Cytidylate_kin"/>
</dbReference>
<dbReference type="InterPro" id="IPR011994">
    <property type="entry name" value="Cytidylate_kinase_dom"/>
</dbReference>
<dbReference type="InterPro" id="IPR027417">
    <property type="entry name" value="P-loop_NTPase"/>
</dbReference>
<dbReference type="NCBIfam" id="TIGR00017">
    <property type="entry name" value="cmk"/>
    <property type="match status" value="1"/>
</dbReference>
<dbReference type="PANTHER" id="PTHR21299:SF2">
    <property type="entry name" value="CYTIDYLATE KINASE"/>
    <property type="match status" value="1"/>
</dbReference>
<dbReference type="PANTHER" id="PTHR21299">
    <property type="entry name" value="CYTIDYLATE KINASE/PANTOATE-BETA-ALANINE LIGASE"/>
    <property type="match status" value="1"/>
</dbReference>
<dbReference type="Pfam" id="PF02224">
    <property type="entry name" value="Cytidylate_kin"/>
    <property type="match status" value="1"/>
</dbReference>
<dbReference type="SUPFAM" id="SSF52540">
    <property type="entry name" value="P-loop containing nucleoside triphosphate hydrolases"/>
    <property type="match status" value="1"/>
</dbReference>
<keyword id="KW-0067">ATP-binding</keyword>
<keyword id="KW-0963">Cytoplasm</keyword>
<keyword id="KW-0418">Kinase</keyword>
<keyword id="KW-0547">Nucleotide-binding</keyword>
<keyword id="KW-0808">Transferase</keyword>
<organism>
    <name type="scientific">Thermotoga neapolitana (strain ATCC 49049 / DSM 4359 / NBRC 107923 / NS-E)</name>
    <dbReference type="NCBI Taxonomy" id="309803"/>
    <lineage>
        <taxon>Bacteria</taxon>
        <taxon>Thermotogati</taxon>
        <taxon>Thermotogota</taxon>
        <taxon>Thermotogae</taxon>
        <taxon>Thermotogales</taxon>
        <taxon>Thermotogaceae</taxon>
        <taxon>Thermotoga</taxon>
    </lineage>
</organism>
<evidence type="ECO:0000255" key="1">
    <source>
        <dbReference type="HAMAP-Rule" id="MF_00238"/>
    </source>
</evidence>
<proteinExistence type="inferred from homology"/>
<reference key="1">
    <citation type="submission" date="2007-11" db="EMBL/GenBank/DDBJ databases">
        <title>The genome sequence of the hyperthermophilic bacterium Thermotoga neapolitana.</title>
        <authorList>
            <person name="Lim S.K."/>
            <person name="Kim J.S."/>
            <person name="Cha S.H."/>
            <person name="Park B.C."/>
            <person name="Lee D.S."/>
            <person name="Tae H.S."/>
            <person name="Kim S.-J."/>
            <person name="Kim J.J."/>
            <person name="Park K.J."/>
            <person name="Lee S.Y."/>
        </authorList>
    </citation>
    <scope>NUCLEOTIDE SEQUENCE [LARGE SCALE GENOMIC DNA]</scope>
    <source>
        <strain>ATCC 49049 / DSM 4359 / NBRC 107923 / NS-E</strain>
    </source>
</reference>
<feature type="chain" id="PRO_1000125307" description="Cytidylate kinase">
    <location>
        <begin position="1"/>
        <end position="220"/>
    </location>
</feature>
<feature type="binding site" evidence="1">
    <location>
        <begin position="9"/>
        <end position="17"/>
    </location>
    <ligand>
        <name>ATP</name>
        <dbReference type="ChEBI" id="CHEBI:30616"/>
    </ligand>
</feature>
<gene>
    <name evidence="1" type="primary">cmk</name>
    <name type="ordered locus">CTN_1050</name>
</gene>